<feature type="chain" id="PRO_0000174964" description="Thymidine kinase">
    <location>
        <begin position="1"/>
        <end position="199"/>
    </location>
</feature>
<feature type="active site" description="Proton acceptor" evidence="1">
    <location>
        <position position="96"/>
    </location>
</feature>
<feature type="binding site" evidence="1">
    <location>
        <begin position="23"/>
        <end position="30"/>
    </location>
    <ligand>
        <name>ATP</name>
        <dbReference type="ChEBI" id="CHEBI:30616"/>
    </ligand>
</feature>
<feature type="binding site" evidence="1">
    <location>
        <begin position="95"/>
        <end position="98"/>
    </location>
    <ligand>
        <name>ATP</name>
        <dbReference type="ChEBI" id="CHEBI:30616"/>
    </ligand>
</feature>
<feature type="binding site" evidence="1">
    <location>
        <position position="152"/>
    </location>
    <ligand>
        <name>Zn(2+)</name>
        <dbReference type="ChEBI" id="CHEBI:29105"/>
    </ligand>
</feature>
<feature type="binding site" evidence="1">
    <location>
        <position position="155"/>
    </location>
    <ligand>
        <name>Zn(2+)</name>
        <dbReference type="ChEBI" id="CHEBI:29105"/>
    </ligand>
</feature>
<feature type="binding site" evidence="1">
    <location>
        <position position="184"/>
    </location>
    <ligand>
        <name>Zn(2+)</name>
        <dbReference type="ChEBI" id="CHEBI:29105"/>
    </ligand>
</feature>
<feature type="binding site" evidence="1">
    <location>
        <position position="187"/>
    </location>
    <ligand>
        <name>Zn(2+)</name>
        <dbReference type="ChEBI" id="CHEBI:29105"/>
    </ligand>
</feature>
<dbReference type="EC" id="2.7.1.21" evidence="1"/>
<dbReference type="EMBL" id="AE015928">
    <property type="protein sequence ID" value="AAO77382.1"/>
    <property type="molecule type" value="Genomic_DNA"/>
</dbReference>
<dbReference type="RefSeq" id="NP_811188.1">
    <property type="nucleotide sequence ID" value="NC_004663.1"/>
</dbReference>
<dbReference type="RefSeq" id="WP_008763837.1">
    <property type="nucleotide sequence ID" value="NZ_UYXG01000028.1"/>
</dbReference>
<dbReference type="SMR" id="Q8A5G4"/>
<dbReference type="FunCoup" id="Q8A5G4">
    <property type="interactions" value="269"/>
</dbReference>
<dbReference type="STRING" id="226186.BT_2275"/>
<dbReference type="PaxDb" id="226186-BT_2275"/>
<dbReference type="EnsemblBacteria" id="AAO77382">
    <property type="protein sequence ID" value="AAO77382"/>
    <property type="gene ID" value="BT_2275"/>
</dbReference>
<dbReference type="KEGG" id="bth:BT_2275"/>
<dbReference type="PATRIC" id="fig|226186.12.peg.2339"/>
<dbReference type="eggNOG" id="COG1435">
    <property type="taxonomic scope" value="Bacteria"/>
</dbReference>
<dbReference type="HOGENOM" id="CLU_064400_3_0_10"/>
<dbReference type="InParanoid" id="Q8A5G4"/>
<dbReference type="OrthoDB" id="9781579at2"/>
<dbReference type="Proteomes" id="UP000001414">
    <property type="component" value="Chromosome"/>
</dbReference>
<dbReference type="GO" id="GO:0005829">
    <property type="term" value="C:cytosol"/>
    <property type="evidence" value="ECO:0000318"/>
    <property type="project" value="GO_Central"/>
</dbReference>
<dbReference type="GO" id="GO:0005524">
    <property type="term" value="F:ATP binding"/>
    <property type="evidence" value="ECO:0007669"/>
    <property type="project" value="UniProtKB-UniRule"/>
</dbReference>
<dbReference type="GO" id="GO:0004797">
    <property type="term" value="F:thymidine kinase activity"/>
    <property type="evidence" value="ECO:0000318"/>
    <property type="project" value="GO_Central"/>
</dbReference>
<dbReference type="GO" id="GO:0008270">
    <property type="term" value="F:zinc ion binding"/>
    <property type="evidence" value="ECO:0007669"/>
    <property type="project" value="UniProtKB-UniRule"/>
</dbReference>
<dbReference type="GO" id="GO:0071897">
    <property type="term" value="P:DNA biosynthetic process"/>
    <property type="evidence" value="ECO:0007669"/>
    <property type="project" value="UniProtKB-KW"/>
</dbReference>
<dbReference type="GO" id="GO:0046104">
    <property type="term" value="P:thymidine metabolic process"/>
    <property type="evidence" value="ECO:0000318"/>
    <property type="project" value="GO_Central"/>
</dbReference>
<dbReference type="FunFam" id="3.30.60.20:FF:000048">
    <property type="entry name" value="Thymidine kinase"/>
    <property type="match status" value="1"/>
</dbReference>
<dbReference type="FunFam" id="3.40.50.300:FF:000384">
    <property type="entry name" value="Thymidine kinase"/>
    <property type="match status" value="1"/>
</dbReference>
<dbReference type="Gene3D" id="3.30.60.20">
    <property type="match status" value="1"/>
</dbReference>
<dbReference type="Gene3D" id="3.40.50.300">
    <property type="entry name" value="P-loop containing nucleotide triphosphate hydrolases"/>
    <property type="match status" value="1"/>
</dbReference>
<dbReference type="HAMAP" id="MF_00124">
    <property type="entry name" value="Thymidine_kinase"/>
    <property type="match status" value="1"/>
</dbReference>
<dbReference type="InterPro" id="IPR027417">
    <property type="entry name" value="P-loop_NTPase"/>
</dbReference>
<dbReference type="InterPro" id="IPR001267">
    <property type="entry name" value="Thymidine_kinase"/>
</dbReference>
<dbReference type="NCBIfam" id="NF003296">
    <property type="entry name" value="PRK04296.1-1"/>
    <property type="match status" value="1"/>
</dbReference>
<dbReference type="PANTHER" id="PTHR11441">
    <property type="entry name" value="THYMIDINE KINASE"/>
    <property type="match status" value="1"/>
</dbReference>
<dbReference type="PANTHER" id="PTHR11441:SF0">
    <property type="entry name" value="THYMIDINE KINASE, CYTOSOLIC"/>
    <property type="match status" value="1"/>
</dbReference>
<dbReference type="Pfam" id="PF00265">
    <property type="entry name" value="TK"/>
    <property type="match status" value="1"/>
</dbReference>
<dbReference type="PIRSF" id="PIRSF035805">
    <property type="entry name" value="TK_cell"/>
    <property type="match status" value="1"/>
</dbReference>
<dbReference type="SUPFAM" id="SSF57716">
    <property type="entry name" value="Glucocorticoid receptor-like (DNA-binding domain)"/>
    <property type="match status" value="1"/>
</dbReference>
<dbReference type="SUPFAM" id="SSF52540">
    <property type="entry name" value="P-loop containing nucleoside triphosphate hydrolases"/>
    <property type="match status" value="1"/>
</dbReference>
<reference key="1">
    <citation type="journal article" date="2003" name="Science">
        <title>A genomic view of the human-Bacteroides thetaiotaomicron symbiosis.</title>
        <authorList>
            <person name="Xu J."/>
            <person name="Bjursell M.K."/>
            <person name="Himrod J."/>
            <person name="Deng S."/>
            <person name="Carmichael L.K."/>
            <person name="Chiang H.C."/>
            <person name="Hooper L.V."/>
            <person name="Gordon J.I."/>
        </authorList>
    </citation>
    <scope>NUCLEOTIDE SEQUENCE [LARGE SCALE GENOMIC DNA]</scope>
    <source>
        <strain>ATCC 29148 / DSM 2079 / JCM 5827 / CCUG 10774 / NCTC 10582 / VPI-5482 / E50</strain>
    </source>
</reference>
<gene>
    <name evidence="1" type="primary">tdk</name>
    <name type="ordered locus">BT_2275</name>
</gene>
<evidence type="ECO:0000255" key="1">
    <source>
        <dbReference type="HAMAP-Rule" id="MF_00124"/>
    </source>
</evidence>
<accession>Q8A5G4</accession>
<protein>
    <recommendedName>
        <fullName evidence="1">Thymidine kinase</fullName>
        <ecNumber evidence="1">2.7.1.21</ecNumber>
    </recommendedName>
</protein>
<organism>
    <name type="scientific">Bacteroides thetaiotaomicron (strain ATCC 29148 / DSM 2079 / JCM 5827 / CCUG 10774 / NCTC 10582 / VPI-5482 / E50)</name>
    <dbReference type="NCBI Taxonomy" id="226186"/>
    <lineage>
        <taxon>Bacteria</taxon>
        <taxon>Pseudomonadati</taxon>
        <taxon>Bacteroidota</taxon>
        <taxon>Bacteroidia</taxon>
        <taxon>Bacteroidales</taxon>
        <taxon>Bacteroidaceae</taxon>
        <taxon>Bacteroides</taxon>
    </lineage>
</organism>
<keyword id="KW-0067">ATP-binding</keyword>
<keyword id="KW-0963">Cytoplasm</keyword>
<keyword id="KW-0237">DNA synthesis</keyword>
<keyword id="KW-0418">Kinase</keyword>
<keyword id="KW-0479">Metal-binding</keyword>
<keyword id="KW-0547">Nucleotide-binding</keyword>
<keyword id="KW-1185">Reference proteome</keyword>
<keyword id="KW-0808">Transferase</keyword>
<keyword id="KW-0862">Zinc</keyword>
<sequence>MVLFSEDHIQETRRRGRIEVICGSMFSGKTEELIRRMKRAKFARQRVEIFKPAIDTRYSEEDVVSHDSHSIASTPIDSSASILLFTSEIDVVGIDEAQFFDDGLIDVCRQLANNGIRVIIAGLDMDFKGNPFGPMPQLCAIADEVSKVHAICVKCGDLASFSHRTVKNDKQVLLGETAEYEPLCRECYLRARGEDGQKI</sequence>
<proteinExistence type="inferred from homology"/>
<comment type="catalytic activity">
    <reaction evidence="1">
        <text>thymidine + ATP = dTMP + ADP + H(+)</text>
        <dbReference type="Rhea" id="RHEA:19129"/>
        <dbReference type="ChEBI" id="CHEBI:15378"/>
        <dbReference type="ChEBI" id="CHEBI:17748"/>
        <dbReference type="ChEBI" id="CHEBI:30616"/>
        <dbReference type="ChEBI" id="CHEBI:63528"/>
        <dbReference type="ChEBI" id="CHEBI:456216"/>
        <dbReference type="EC" id="2.7.1.21"/>
    </reaction>
</comment>
<comment type="subunit">
    <text evidence="1">Homotetramer.</text>
</comment>
<comment type="subcellular location">
    <subcellularLocation>
        <location evidence="1">Cytoplasm</location>
    </subcellularLocation>
</comment>
<comment type="similarity">
    <text evidence="1">Belongs to the thymidine kinase family.</text>
</comment>
<name>KITH_BACTN</name>